<dbReference type="EC" id="1.11.1.25" evidence="7"/>
<dbReference type="EMBL" id="AC068073">
    <property type="protein sequence ID" value="AAF66133.1"/>
    <property type="status" value="ALT_INIT"/>
    <property type="molecule type" value="Genomic_DNA"/>
</dbReference>
<dbReference type="EMBL" id="CP002686">
    <property type="protein sequence ID" value="AEE74337.1"/>
    <property type="molecule type" value="Genomic_DNA"/>
</dbReference>
<dbReference type="EMBL" id="AY052278">
    <property type="protein sequence ID" value="AAK96471.1"/>
    <property type="molecule type" value="mRNA"/>
</dbReference>
<dbReference type="EMBL" id="AY098963">
    <property type="protein sequence ID" value="AAM19973.1"/>
    <property type="molecule type" value="mRNA"/>
</dbReference>
<dbReference type="EMBL" id="AY085396">
    <property type="protein sequence ID" value="AAM62624.1"/>
    <property type="molecule type" value="mRNA"/>
</dbReference>
<dbReference type="RefSeq" id="NP_566268.1">
    <property type="nucleotide sequence ID" value="NM_111480.4"/>
</dbReference>
<dbReference type="SMR" id="Q9M7T0"/>
<dbReference type="BioGRID" id="5113">
    <property type="interactions" value="3"/>
</dbReference>
<dbReference type="FunCoup" id="Q9M7T0">
    <property type="interactions" value="963"/>
</dbReference>
<dbReference type="STRING" id="3702.Q9M7T0"/>
<dbReference type="PeroxiBase" id="4354">
    <property type="entry name" value="AtPrxII06"/>
</dbReference>
<dbReference type="iPTMnet" id="Q9M7T0"/>
<dbReference type="SwissPalm" id="Q9M7T0"/>
<dbReference type="PaxDb" id="3702-AT3G06050.1"/>
<dbReference type="ProteomicsDB" id="226340"/>
<dbReference type="EnsemblPlants" id="AT3G06050.1">
    <property type="protein sequence ID" value="AT3G06050.1"/>
    <property type="gene ID" value="AT3G06050"/>
</dbReference>
<dbReference type="GeneID" id="819778"/>
<dbReference type="Gramene" id="AT3G06050.1">
    <property type="protein sequence ID" value="AT3G06050.1"/>
    <property type="gene ID" value="AT3G06050"/>
</dbReference>
<dbReference type="KEGG" id="ath:AT3G06050"/>
<dbReference type="Araport" id="AT3G06050"/>
<dbReference type="TAIR" id="AT3G06050">
    <property type="gene designation" value="PRXIIF"/>
</dbReference>
<dbReference type="eggNOG" id="KOG0541">
    <property type="taxonomic scope" value="Eukaryota"/>
</dbReference>
<dbReference type="HOGENOM" id="CLU_072440_2_1_1"/>
<dbReference type="InParanoid" id="Q9M7T0"/>
<dbReference type="OMA" id="YTMNGWA"/>
<dbReference type="OrthoDB" id="1882547at2759"/>
<dbReference type="PhylomeDB" id="Q9M7T0"/>
<dbReference type="BioCyc" id="ARA:AT3G06050-MONOMER"/>
<dbReference type="PRO" id="PR:Q9M7T0"/>
<dbReference type="Proteomes" id="UP000006548">
    <property type="component" value="Chromosome 3"/>
</dbReference>
<dbReference type="ExpressionAtlas" id="Q9M7T0">
    <property type="expression patterns" value="baseline and differential"/>
</dbReference>
<dbReference type="GO" id="GO:0005829">
    <property type="term" value="C:cytosol"/>
    <property type="evidence" value="ECO:0007005"/>
    <property type="project" value="TAIR"/>
</dbReference>
<dbReference type="GO" id="GO:0005759">
    <property type="term" value="C:mitochondrial matrix"/>
    <property type="evidence" value="ECO:0000314"/>
    <property type="project" value="TAIR"/>
</dbReference>
<dbReference type="GO" id="GO:0005739">
    <property type="term" value="C:mitochondrion"/>
    <property type="evidence" value="ECO:0007005"/>
    <property type="project" value="TAIR"/>
</dbReference>
<dbReference type="GO" id="GO:0004601">
    <property type="term" value="F:peroxidase activity"/>
    <property type="evidence" value="ECO:0000314"/>
    <property type="project" value="TAIR"/>
</dbReference>
<dbReference type="GO" id="GO:0008379">
    <property type="term" value="F:thioredoxin peroxidase activity"/>
    <property type="evidence" value="ECO:0007669"/>
    <property type="project" value="InterPro"/>
</dbReference>
<dbReference type="GO" id="GO:0034599">
    <property type="term" value="P:cellular response to oxidative stress"/>
    <property type="evidence" value="ECO:0007669"/>
    <property type="project" value="InterPro"/>
</dbReference>
<dbReference type="GO" id="GO:0006979">
    <property type="term" value="P:response to oxidative stress"/>
    <property type="evidence" value="ECO:0000315"/>
    <property type="project" value="TAIR"/>
</dbReference>
<dbReference type="CDD" id="cd03013">
    <property type="entry name" value="PRX5_like"/>
    <property type="match status" value="1"/>
</dbReference>
<dbReference type="FunFam" id="3.40.30.10:FF:000190">
    <property type="entry name" value="Peroxiredoxin"/>
    <property type="match status" value="1"/>
</dbReference>
<dbReference type="Gene3D" id="3.40.30.10">
    <property type="entry name" value="Glutaredoxin"/>
    <property type="match status" value="1"/>
</dbReference>
<dbReference type="InterPro" id="IPR037944">
    <property type="entry name" value="PRX5-like"/>
</dbReference>
<dbReference type="InterPro" id="IPR013740">
    <property type="entry name" value="Redoxin"/>
</dbReference>
<dbReference type="InterPro" id="IPR036249">
    <property type="entry name" value="Thioredoxin-like_sf"/>
</dbReference>
<dbReference type="InterPro" id="IPR013766">
    <property type="entry name" value="Thioredoxin_domain"/>
</dbReference>
<dbReference type="PANTHER" id="PTHR10430">
    <property type="entry name" value="PEROXIREDOXIN"/>
    <property type="match status" value="1"/>
</dbReference>
<dbReference type="PANTHER" id="PTHR10430:SF34">
    <property type="entry name" value="PEROXIREDOXIN-2F, MITOCHONDRIAL"/>
    <property type="match status" value="1"/>
</dbReference>
<dbReference type="Pfam" id="PF08534">
    <property type="entry name" value="Redoxin"/>
    <property type="match status" value="1"/>
</dbReference>
<dbReference type="SUPFAM" id="SSF52833">
    <property type="entry name" value="Thioredoxin-like"/>
    <property type="match status" value="1"/>
</dbReference>
<dbReference type="PROSITE" id="PS51352">
    <property type="entry name" value="THIOREDOXIN_2"/>
    <property type="match status" value="1"/>
</dbReference>
<comment type="function">
    <text evidence="7">Thiol-specific peroxidase that catalyzes the reduction of hydrogen peroxide and organic hydroperoxides to water and alcohols, respectively. Plays a role in cell protection against oxidative stress by detoxifying peroxides. Reduces preferentially hydrogen peroxide rather than alkyl peroxides. May be involved in mitochondrial redox homeostasis.</text>
</comment>
<comment type="catalytic activity">
    <reaction evidence="7">
        <text>[glutaredoxin]-dithiol + a hydroperoxide = [glutaredoxin]-disulfide + an alcohol + H2O</text>
        <dbReference type="Rhea" id="RHEA:62624"/>
        <dbReference type="Rhea" id="RHEA-COMP:10729"/>
        <dbReference type="Rhea" id="RHEA-COMP:10730"/>
        <dbReference type="ChEBI" id="CHEBI:15377"/>
        <dbReference type="ChEBI" id="CHEBI:29950"/>
        <dbReference type="ChEBI" id="CHEBI:30879"/>
        <dbReference type="ChEBI" id="CHEBI:35924"/>
        <dbReference type="ChEBI" id="CHEBI:50058"/>
        <dbReference type="EC" id="1.11.1.25"/>
    </reaction>
</comment>
<comment type="subunit">
    <text evidence="7">Monomer.</text>
</comment>
<comment type="subcellular location">
    <subcellularLocation>
        <location evidence="3 4 6 7 12">Mitochondrion matrix</location>
    </subcellularLocation>
</comment>
<comment type="tissue specificity">
    <text evidence="5 9">Expressed in the whole plant.</text>
</comment>
<comment type="induction">
    <text evidence="4">By oxidative stress.</text>
</comment>
<comment type="miscellaneous">
    <text evidence="11">The active site is a conserved redox-active cysteine residue, the peroxidatic cysteine (C(P)), which makes the nucleophilic attack on the peroxide substrate. The peroxide oxidizes the C(P)-SH to cysteine sulfenic acid (C(P)-SOH), which then reacts with another cysteine residue, the resolving cysteine (C(R)), to form a disulfide bridge. The disulfide is subsequently reduced by an appropriate electron donor to complete the catalytic cycle. In this 1-Cys peroxiredoxin, no C(R) is present and C(P) instead forms a disulfide with a cysteine from another protein or with a small thiol molecule. C(P) can be reactivated by glutathione or the mitochondrial glutaredoxin (Grx) or thioredoxin (Trx) systems.</text>
</comment>
<comment type="similarity">
    <text evidence="10">Belongs to the peroxiredoxin family. Prx5 subfamily.</text>
</comment>
<comment type="sequence caution" evidence="10">
    <conflict type="erroneous initiation">
        <sequence resource="EMBL-CDS" id="AAF66133"/>
    </conflict>
</comment>
<accession>Q9M7T0</accession>
<accession>Q8LEJ1</accession>
<accession>Q8LPM1</accession>
<accession>Q941C2</accession>
<reference key="1">
    <citation type="journal article" date="2000" name="Nature">
        <title>Sequence and analysis of chromosome 3 of the plant Arabidopsis thaliana.</title>
        <authorList>
            <person name="Salanoubat M."/>
            <person name="Lemcke K."/>
            <person name="Rieger M."/>
            <person name="Ansorge W."/>
            <person name="Unseld M."/>
            <person name="Fartmann B."/>
            <person name="Valle G."/>
            <person name="Bloecker H."/>
            <person name="Perez-Alonso M."/>
            <person name="Obermaier B."/>
            <person name="Delseny M."/>
            <person name="Boutry M."/>
            <person name="Grivell L.A."/>
            <person name="Mache R."/>
            <person name="Puigdomenech P."/>
            <person name="De Simone V."/>
            <person name="Choisne N."/>
            <person name="Artiguenave F."/>
            <person name="Robert C."/>
            <person name="Brottier P."/>
            <person name="Wincker P."/>
            <person name="Cattolico L."/>
            <person name="Weissenbach J."/>
            <person name="Saurin W."/>
            <person name="Quetier F."/>
            <person name="Schaefer M."/>
            <person name="Mueller-Auer S."/>
            <person name="Gabel C."/>
            <person name="Fuchs M."/>
            <person name="Benes V."/>
            <person name="Wurmbach E."/>
            <person name="Drzonek H."/>
            <person name="Erfle H."/>
            <person name="Jordan N."/>
            <person name="Bangert S."/>
            <person name="Wiedelmann R."/>
            <person name="Kranz H."/>
            <person name="Voss H."/>
            <person name="Holland R."/>
            <person name="Brandt P."/>
            <person name="Nyakatura G."/>
            <person name="Vezzi A."/>
            <person name="D'Angelo M."/>
            <person name="Pallavicini A."/>
            <person name="Toppo S."/>
            <person name="Simionati B."/>
            <person name="Conrad A."/>
            <person name="Hornischer K."/>
            <person name="Kauer G."/>
            <person name="Loehnert T.-H."/>
            <person name="Nordsiek G."/>
            <person name="Reichelt J."/>
            <person name="Scharfe M."/>
            <person name="Schoen O."/>
            <person name="Bargues M."/>
            <person name="Terol J."/>
            <person name="Climent J."/>
            <person name="Navarro P."/>
            <person name="Collado C."/>
            <person name="Perez-Perez A."/>
            <person name="Ottenwaelder B."/>
            <person name="Duchemin D."/>
            <person name="Cooke R."/>
            <person name="Laudie M."/>
            <person name="Berger-Llauro C."/>
            <person name="Purnelle B."/>
            <person name="Masuy D."/>
            <person name="de Haan M."/>
            <person name="Maarse A.C."/>
            <person name="Alcaraz J.-P."/>
            <person name="Cottet A."/>
            <person name="Casacuberta E."/>
            <person name="Monfort A."/>
            <person name="Argiriou A."/>
            <person name="Flores M."/>
            <person name="Liguori R."/>
            <person name="Vitale D."/>
            <person name="Mannhaupt G."/>
            <person name="Haase D."/>
            <person name="Schoof H."/>
            <person name="Rudd S."/>
            <person name="Zaccaria P."/>
            <person name="Mewes H.-W."/>
            <person name="Mayer K.F.X."/>
            <person name="Kaul S."/>
            <person name="Town C.D."/>
            <person name="Koo H.L."/>
            <person name="Tallon L.J."/>
            <person name="Jenkins J."/>
            <person name="Rooney T."/>
            <person name="Rizzo M."/>
            <person name="Walts A."/>
            <person name="Utterback T."/>
            <person name="Fujii C.Y."/>
            <person name="Shea T.P."/>
            <person name="Creasy T.H."/>
            <person name="Haas B."/>
            <person name="Maiti R."/>
            <person name="Wu D."/>
            <person name="Peterson J."/>
            <person name="Van Aken S."/>
            <person name="Pai G."/>
            <person name="Militscher J."/>
            <person name="Sellers P."/>
            <person name="Gill J.E."/>
            <person name="Feldblyum T.V."/>
            <person name="Preuss D."/>
            <person name="Lin X."/>
            <person name="Nierman W.C."/>
            <person name="Salzberg S.L."/>
            <person name="White O."/>
            <person name="Venter J.C."/>
            <person name="Fraser C.M."/>
            <person name="Kaneko T."/>
            <person name="Nakamura Y."/>
            <person name="Sato S."/>
            <person name="Kato T."/>
            <person name="Asamizu E."/>
            <person name="Sasamoto S."/>
            <person name="Kimura T."/>
            <person name="Idesawa K."/>
            <person name="Kawashima K."/>
            <person name="Kishida Y."/>
            <person name="Kiyokawa C."/>
            <person name="Kohara M."/>
            <person name="Matsumoto M."/>
            <person name="Matsuno A."/>
            <person name="Muraki A."/>
            <person name="Nakayama S."/>
            <person name="Nakazaki N."/>
            <person name="Shinpo S."/>
            <person name="Takeuchi C."/>
            <person name="Wada T."/>
            <person name="Watanabe A."/>
            <person name="Yamada M."/>
            <person name="Yasuda M."/>
            <person name="Tabata S."/>
        </authorList>
    </citation>
    <scope>NUCLEOTIDE SEQUENCE [LARGE SCALE GENOMIC DNA]</scope>
    <source>
        <strain>cv. Columbia</strain>
    </source>
</reference>
<reference evidence="10 13" key="2">
    <citation type="journal article" date="2017" name="Plant J.">
        <title>Araport11: a complete reannotation of the Arabidopsis thaliana reference genome.</title>
        <authorList>
            <person name="Cheng C.Y."/>
            <person name="Krishnakumar V."/>
            <person name="Chan A.P."/>
            <person name="Thibaud-Nissen F."/>
            <person name="Schobel S."/>
            <person name="Town C.D."/>
        </authorList>
    </citation>
    <scope>GENOME REANNOTATION</scope>
    <source>
        <strain>cv. Columbia</strain>
    </source>
</reference>
<reference key="3">
    <citation type="journal article" date="2003" name="Science">
        <title>Empirical analysis of transcriptional activity in the Arabidopsis genome.</title>
        <authorList>
            <person name="Yamada K."/>
            <person name="Lim J."/>
            <person name="Dale J.M."/>
            <person name="Chen H."/>
            <person name="Shinn P."/>
            <person name="Palm C.J."/>
            <person name="Southwick A.M."/>
            <person name="Wu H.C."/>
            <person name="Kim C.J."/>
            <person name="Nguyen M."/>
            <person name="Pham P.K."/>
            <person name="Cheuk R.F."/>
            <person name="Karlin-Newmann G."/>
            <person name="Liu S.X."/>
            <person name="Lam B."/>
            <person name="Sakano H."/>
            <person name="Wu T."/>
            <person name="Yu G."/>
            <person name="Miranda M."/>
            <person name="Quach H.L."/>
            <person name="Tripp M."/>
            <person name="Chang C.H."/>
            <person name="Lee J.M."/>
            <person name="Toriumi M.J."/>
            <person name="Chan M.M."/>
            <person name="Tang C.C."/>
            <person name="Onodera C.S."/>
            <person name="Deng J.M."/>
            <person name="Akiyama K."/>
            <person name="Ansari Y."/>
            <person name="Arakawa T."/>
            <person name="Banh J."/>
            <person name="Banno F."/>
            <person name="Bowser L."/>
            <person name="Brooks S.Y."/>
            <person name="Carninci P."/>
            <person name="Chao Q."/>
            <person name="Choy N."/>
            <person name="Enju A."/>
            <person name="Goldsmith A.D."/>
            <person name="Gurjal M."/>
            <person name="Hansen N.F."/>
            <person name="Hayashizaki Y."/>
            <person name="Johnson-Hopson C."/>
            <person name="Hsuan V.W."/>
            <person name="Iida K."/>
            <person name="Karnes M."/>
            <person name="Khan S."/>
            <person name="Koesema E."/>
            <person name="Ishida J."/>
            <person name="Jiang P.X."/>
            <person name="Jones T."/>
            <person name="Kawai J."/>
            <person name="Kamiya A."/>
            <person name="Meyers C."/>
            <person name="Nakajima M."/>
            <person name="Narusaka M."/>
            <person name="Seki M."/>
            <person name="Sakurai T."/>
            <person name="Satou M."/>
            <person name="Tamse R."/>
            <person name="Vaysberg M."/>
            <person name="Wallender E.K."/>
            <person name="Wong C."/>
            <person name="Yamamura Y."/>
            <person name="Yuan S."/>
            <person name="Shinozaki K."/>
            <person name="Davis R.W."/>
            <person name="Theologis A."/>
            <person name="Ecker J.R."/>
        </authorList>
    </citation>
    <scope>NUCLEOTIDE SEQUENCE [LARGE SCALE MRNA]</scope>
    <source>
        <strain>cv. Columbia</strain>
    </source>
</reference>
<reference evidence="10 13" key="4">
    <citation type="submission" date="2002-03" db="EMBL/GenBank/DDBJ databases">
        <title>Full-length cDNA from Arabidopsis thaliana.</title>
        <authorList>
            <person name="Brover V.V."/>
            <person name="Troukhan M.E."/>
            <person name="Alexandrov N.A."/>
            <person name="Lu Y.-P."/>
            <person name="Flavell R.B."/>
            <person name="Feldmann K.A."/>
        </authorList>
    </citation>
    <scope>NUCLEOTIDE SEQUENCE [LARGE SCALE MRNA]</scope>
</reference>
<reference evidence="10" key="5">
    <citation type="journal article" date="2001" name="Plant Physiol.">
        <title>Proteomic approach to identify novel mitochondrial proteins in Arabidopsis.</title>
        <authorList>
            <person name="Kruft V."/>
            <person name="Eubel H."/>
            <person name="Jaensch L."/>
            <person name="Werhahn W."/>
            <person name="Braun H.-P."/>
        </authorList>
    </citation>
    <scope>PROTEIN SEQUENCE OF 31-37</scope>
    <scope>SUBCELLULAR LOCATION</scope>
    <source>
        <tissue>Leaf</tissue>
        <tissue>Stem</tissue>
    </source>
</reference>
<reference key="6">
    <citation type="journal article" date="2002" name="Plant J.">
        <title>The impact of oxidative stress on Arabidopsis mitochondria.</title>
        <authorList>
            <person name="Sweetlove L.J."/>
            <person name="Heazlewood J.L."/>
            <person name="Herald V."/>
            <person name="Holtzapffel R."/>
            <person name="Day D.A."/>
            <person name="Leaver C.J."/>
            <person name="Millar A.H."/>
        </authorList>
    </citation>
    <scope>IDENTIFICATION BY MASS SPECTROMETRY</scope>
    <scope>SUBCELLULAR LOCATION</scope>
    <scope>INDUCTION</scope>
</reference>
<reference key="7">
    <citation type="journal article" date="2002" name="Plant Physiol. Biochem.">
        <title>Type II peroxiredoxin C, a member of the peroxiredoxin family of Arabidopsis thaliana: its expression and activity in comparison with other peroxiredoxins.</title>
        <authorList>
            <person name="Horling F."/>
            <person name="Koenig J."/>
            <person name="Dietz K.-J."/>
        </authorList>
    </citation>
    <scope>TISSUE SPECIFICITY</scope>
</reference>
<reference key="8">
    <citation type="journal article" date="2003" name="Plant Physiol.">
        <title>Resemblance and dissemblance of Arabidopsis type II peroxiredoxins: similar sequences for divergent gene expression, protein localization, and activity.</title>
        <authorList>
            <person name="Brehelin C."/>
            <person name="Meyer E.H."/>
            <person name="de Souris J.-P."/>
            <person name="Bonnard G."/>
            <person name="Meyer Y."/>
        </authorList>
    </citation>
    <scope>TISSUE SPECIFICITY</scope>
</reference>
<reference key="9">
    <citation type="journal article" date="2004" name="Plant Cell">
        <title>Experimental analysis of the Arabidopsis mitochondrial proteome highlights signaling and regulatory components, provides assessment of targeting prediction programs, and indicates plant-specific mitochondrial proteins.</title>
        <authorList>
            <person name="Heazlewood J.L."/>
            <person name="Tonti-Filippini J.S."/>
            <person name="Gout A.M."/>
            <person name="Day D.A."/>
            <person name="Whelan J."/>
            <person name="Millar A.H."/>
        </authorList>
    </citation>
    <scope>IDENTIFICATION BY MASS SPECTROMETRY</scope>
    <scope>SUBCELLULAR LOCATION [LARGE SCALE ANALYSIS]</scope>
    <source>
        <strain>cv. Landsberg erecta</strain>
    </source>
</reference>
<reference key="10">
    <citation type="journal article" date="2005" name="Free Radic. Biol. Med.">
        <title>The plant multigenic family of thiol peroxidases.</title>
        <authorList>
            <person name="Rouhier N."/>
            <person name="Jacquot J.-P."/>
        </authorList>
    </citation>
    <scope>GENE FAMILY ORGANIZATION</scope>
    <scope>NOMENCLATURE</scope>
</reference>
<reference key="11">
    <citation type="journal article" date="2005" name="J. Biol. Chem.">
        <title>The mitochondrial type II peroxiredoxin F is essential for redox homeostasis and root growth of Arabidopsis thaliana under stress.</title>
        <authorList>
            <person name="Finkemeier I."/>
            <person name="Goodman M."/>
            <person name="Lamkemeyer P."/>
            <person name="Kandlbinder A."/>
            <person name="Sweetlove L.J."/>
            <person name="Dietz K.-J."/>
        </authorList>
    </citation>
    <scope>FUNCTION</scope>
    <scope>CATALYTIC ACTIVITY</scope>
    <scope>SUBUNIT</scope>
    <scope>SUBCELLULAR LOCATION</scope>
</reference>
<reference key="12">
    <citation type="journal article" date="2012" name="J. Proteome Res.">
        <title>Identification of phosphoproteins in Arabidopsis thaliana leaves using polyethylene glycol fractionation, immobilized metal-ion affinity chromatography, two-dimensional gel electrophoresis and mass spectrometry.</title>
        <authorList>
            <person name="Aryal U.K."/>
            <person name="Krochko J.E."/>
            <person name="Ross A.R."/>
        </authorList>
    </citation>
    <scope>PHOSPHORYLATION [LARGE SCALE ANALYSIS] AT THR-37 AND SER-149</scope>
    <scope>IDENTIFICATION BY MASS SPECTROMETRY [LARGE SCALE ANALYSIS]</scope>
</reference>
<reference key="13">
    <citation type="journal article" date="2015" name="J. Exp. Bot.">
        <title>Identification of cleavage sites and substrate proteins for two mitochondrial intermediate peptidases in Arabidopsis thaliana.</title>
        <authorList>
            <person name="Carrie C."/>
            <person name="Venne A.S."/>
            <person name="Zahedi R.P."/>
            <person name="Soll J."/>
        </authorList>
    </citation>
    <scope>IDENTIFICATION BY MASS SPECTROMETRY</scope>
    <scope>CLEAVAGE OF TRANSIT PEPTIDE AFTER PHE-30</scope>
</reference>
<keyword id="KW-0049">Antioxidant</keyword>
<keyword id="KW-0903">Direct protein sequencing</keyword>
<keyword id="KW-0496">Mitochondrion</keyword>
<keyword id="KW-0560">Oxidoreductase</keyword>
<keyword id="KW-0575">Peroxidase</keyword>
<keyword id="KW-0597">Phosphoprotein</keyword>
<keyword id="KW-0676">Redox-active center</keyword>
<keyword id="KW-1185">Reference proteome</keyword>
<keyword id="KW-0346">Stress response</keyword>
<keyword id="KW-0809">Transit peptide</keyword>
<protein>
    <recommendedName>
        <fullName>Peroxiredoxin-2F, mitochondrial</fullName>
        <ecNumber evidence="7">1.11.1.25</ecNumber>
    </recommendedName>
    <alternativeName>
        <fullName evidence="10">Glutaredoxin-dependent peroxiredoxin</fullName>
    </alternativeName>
    <alternativeName>
        <fullName>Peroxiredoxin IIF</fullName>
    </alternativeName>
    <alternativeName>
        <fullName>Thioredoxin peroxidase 2F</fullName>
    </alternativeName>
</protein>
<name>PRX2F_ARATH</name>
<proteinExistence type="evidence at protein level"/>
<evidence type="ECO:0000250" key="1">
    <source>
        <dbReference type="UniProtKB" id="A9PCL4"/>
    </source>
</evidence>
<evidence type="ECO:0000255" key="2">
    <source>
        <dbReference type="PROSITE-ProRule" id="PRU00691"/>
    </source>
</evidence>
<evidence type="ECO:0000269" key="3">
    <source>
    </source>
</evidence>
<evidence type="ECO:0000269" key="4">
    <source>
    </source>
</evidence>
<evidence type="ECO:0000269" key="5">
    <source>
    </source>
</evidence>
<evidence type="ECO:0000269" key="6">
    <source>
    </source>
</evidence>
<evidence type="ECO:0000269" key="7">
    <source>
    </source>
</evidence>
<evidence type="ECO:0000269" key="8">
    <source>
    </source>
</evidence>
<evidence type="ECO:0000269" key="9">
    <source ref="7"/>
</evidence>
<evidence type="ECO:0000305" key="10"/>
<evidence type="ECO:0000305" key="11">
    <source>
    </source>
</evidence>
<evidence type="ECO:0000305" key="12">
    <source>
    </source>
</evidence>
<evidence type="ECO:0000312" key="13">
    <source>
        <dbReference type="EMBL" id="AAF66133.1"/>
    </source>
</evidence>
<evidence type="ECO:0007744" key="14">
    <source>
    </source>
</evidence>
<feature type="transit peptide" description="Mitochondrion" evidence="3 8">
    <location>
        <begin position="1"/>
        <end position="30"/>
    </location>
</feature>
<feature type="chain" id="PRO_0000023800" description="Peroxiredoxin-2F, mitochondrial">
    <location>
        <begin position="31"/>
        <end position="201"/>
    </location>
</feature>
<feature type="domain" description="Thioredoxin" evidence="2">
    <location>
        <begin position="37"/>
        <end position="201"/>
    </location>
</feature>
<feature type="active site" description="Cysteine sulfenic acid (-SOH) intermediate" evidence="1">
    <location>
        <position position="89"/>
    </location>
</feature>
<feature type="modified residue" description="Phosphothreonine" evidence="14">
    <location>
        <position position="37"/>
    </location>
</feature>
<feature type="modified residue" description="Phosphoserine" evidence="14">
    <location>
        <position position="149"/>
    </location>
</feature>
<feature type="sequence conflict" description="In Ref. 4; AAM62624." evidence="10" ref="4">
    <original>S</original>
    <variation>A</variation>
    <location>
        <position position="16"/>
    </location>
</feature>
<gene>
    <name type="primary">PRXIIF</name>
    <name type="ordered locus">At3g06050</name>
    <name type="ORF">F24F17.3</name>
</gene>
<sequence>MAMSILKLRNLSALRSAANSARIGVSSRGFSKLAEGTDITSAAPGVSLQKARSWDEGVSSKFSTTPLSDIFKGKKVVIFGLPGAYTGVCSQQHVPSYKSHIDKFKAKGIDSVICVSVNDPFAINGWAEKLGAKDAIEFYGDFDGKFHKSLGLDKDLSAALLGPRSERWSAYVEDGKVKAVNVEEAPSDFKVTGAEVILGQI</sequence>
<organism evidence="13">
    <name type="scientific">Arabidopsis thaliana</name>
    <name type="common">Mouse-ear cress</name>
    <dbReference type="NCBI Taxonomy" id="3702"/>
    <lineage>
        <taxon>Eukaryota</taxon>
        <taxon>Viridiplantae</taxon>
        <taxon>Streptophyta</taxon>
        <taxon>Embryophyta</taxon>
        <taxon>Tracheophyta</taxon>
        <taxon>Spermatophyta</taxon>
        <taxon>Magnoliopsida</taxon>
        <taxon>eudicotyledons</taxon>
        <taxon>Gunneridae</taxon>
        <taxon>Pentapetalae</taxon>
        <taxon>rosids</taxon>
        <taxon>malvids</taxon>
        <taxon>Brassicales</taxon>
        <taxon>Brassicaceae</taxon>
        <taxon>Camelineae</taxon>
        <taxon>Arabidopsis</taxon>
    </lineage>
</organism>